<feature type="chain" id="PRO_0000277951" description="Small ribosomal subunit protein uS9">
    <location>
        <begin position="1"/>
        <end position="161"/>
    </location>
</feature>
<accession>Q4UKS7</accession>
<organism>
    <name type="scientific">Rickettsia felis (strain ATCC VR-1525 / URRWXCal2)</name>
    <name type="common">Rickettsia azadi</name>
    <dbReference type="NCBI Taxonomy" id="315456"/>
    <lineage>
        <taxon>Bacteria</taxon>
        <taxon>Pseudomonadati</taxon>
        <taxon>Pseudomonadota</taxon>
        <taxon>Alphaproteobacteria</taxon>
        <taxon>Rickettsiales</taxon>
        <taxon>Rickettsiaceae</taxon>
        <taxon>Rickettsieae</taxon>
        <taxon>Rickettsia</taxon>
        <taxon>spotted fever group</taxon>
    </lineage>
</organism>
<name>RS9_RICFE</name>
<evidence type="ECO:0000255" key="1">
    <source>
        <dbReference type="HAMAP-Rule" id="MF_00532"/>
    </source>
</evidence>
<evidence type="ECO:0000305" key="2"/>
<sequence length="161" mass="18245">MTELKVKTEKVEKQLTRELLKPVLKTPKEKIDNSGKFYATGKRKNAIARVWLKVGKGKIVVNKKTIDQYFPSETYVKTILQPFVLTKTIDQYDVICTVRGGGISGQKGAILHGISKALDKSAPDFHAILRKGGLLTRDSRVVERKKYGQRKARKKTQFSKR</sequence>
<proteinExistence type="inferred from homology"/>
<keyword id="KW-0687">Ribonucleoprotein</keyword>
<keyword id="KW-0689">Ribosomal protein</keyword>
<gene>
    <name evidence="1" type="primary">rpsI</name>
    <name type="ordered locus">RF_0995</name>
</gene>
<dbReference type="EMBL" id="CP000053">
    <property type="protein sequence ID" value="AAY61846.1"/>
    <property type="molecule type" value="Genomic_DNA"/>
</dbReference>
<dbReference type="SMR" id="Q4UKS7"/>
<dbReference type="STRING" id="315456.RF_0995"/>
<dbReference type="KEGG" id="rfe:RF_0995"/>
<dbReference type="eggNOG" id="COG0103">
    <property type="taxonomic scope" value="Bacteria"/>
</dbReference>
<dbReference type="HOGENOM" id="CLU_046483_2_0_5"/>
<dbReference type="OrthoDB" id="9803965at2"/>
<dbReference type="Proteomes" id="UP000008548">
    <property type="component" value="Chromosome"/>
</dbReference>
<dbReference type="GO" id="GO:0022627">
    <property type="term" value="C:cytosolic small ribosomal subunit"/>
    <property type="evidence" value="ECO:0007669"/>
    <property type="project" value="TreeGrafter"/>
</dbReference>
<dbReference type="GO" id="GO:0003723">
    <property type="term" value="F:RNA binding"/>
    <property type="evidence" value="ECO:0007669"/>
    <property type="project" value="TreeGrafter"/>
</dbReference>
<dbReference type="GO" id="GO:0003735">
    <property type="term" value="F:structural constituent of ribosome"/>
    <property type="evidence" value="ECO:0007669"/>
    <property type="project" value="InterPro"/>
</dbReference>
<dbReference type="GO" id="GO:0006412">
    <property type="term" value="P:translation"/>
    <property type="evidence" value="ECO:0007669"/>
    <property type="project" value="UniProtKB-UniRule"/>
</dbReference>
<dbReference type="FunFam" id="3.30.230.10:FF:000001">
    <property type="entry name" value="30S ribosomal protein S9"/>
    <property type="match status" value="1"/>
</dbReference>
<dbReference type="Gene3D" id="3.30.230.10">
    <property type="match status" value="1"/>
</dbReference>
<dbReference type="HAMAP" id="MF_00532_B">
    <property type="entry name" value="Ribosomal_uS9_B"/>
    <property type="match status" value="1"/>
</dbReference>
<dbReference type="InterPro" id="IPR020568">
    <property type="entry name" value="Ribosomal_Su5_D2-typ_SF"/>
</dbReference>
<dbReference type="InterPro" id="IPR000754">
    <property type="entry name" value="Ribosomal_uS9"/>
</dbReference>
<dbReference type="InterPro" id="IPR023035">
    <property type="entry name" value="Ribosomal_uS9_bac/plastid"/>
</dbReference>
<dbReference type="InterPro" id="IPR020574">
    <property type="entry name" value="Ribosomal_uS9_CS"/>
</dbReference>
<dbReference type="InterPro" id="IPR014721">
    <property type="entry name" value="Ribsml_uS5_D2-typ_fold_subgr"/>
</dbReference>
<dbReference type="NCBIfam" id="NF001099">
    <property type="entry name" value="PRK00132.1"/>
    <property type="match status" value="1"/>
</dbReference>
<dbReference type="PANTHER" id="PTHR21569">
    <property type="entry name" value="RIBOSOMAL PROTEIN S9"/>
    <property type="match status" value="1"/>
</dbReference>
<dbReference type="PANTHER" id="PTHR21569:SF1">
    <property type="entry name" value="SMALL RIBOSOMAL SUBUNIT PROTEIN US9M"/>
    <property type="match status" value="1"/>
</dbReference>
<dbReference type="Pfam" id="PF00380">
    <property type="entry name" value="Ribosomal_S9"/>
    <property type="match status" value="1"/>
</dbReference>
<dbReference type="SUPFAM" id="SSF54211">
    <property type="entry name" value="Ribosomal protein S5 domain 2-like"/>
    <property type="match status" value="1"/>
</dbReference>
<dbReference type="PROSITE" id="PS00360">
    <property type="entry name" value="RIBOSOMAL_S9"/>
    <property type="match status" value="1"/>
</dbReference>
<reference key="1">
    <citation type="journal article" date="2005" name="PLoS Biol.">
        <title>The genome sequence of Rickettsia felis identifies the first putative conjugative plasmid in an obligate intracellular parasite.</title>
        <authorList>
            <person name="Ogata H."/>
            <person name="Renesto P."/>
            <person name="Audic S."/>
            <person name="Robert C."/>
            <person name="Blanc G."/>
            <person name="Fournier P.-E."/>
            <person name="Parinello H."/>
            <person name="Claverie J.-M."/>
            <person name="Raoult D."/>
        </authorList>
    </citation>
    <scope>NUCLEOTIDE SEQUENCE [LARGE SCALE GENOMIC DNA]</scope>
    <source>
        <strain>ATCC VR-1525 / URRWXCal2</strain>
    </source>
</reference>
<protein>
    <recommendedName>
        <fullName evidence="1">Small ribosomal subunit protein uS9</fullName>
    </recommendedName>
    <alternativeName>
        <fullName evidence="2">30S ribosomal protein S9</fullName>
    </alternativeName>
</protein>
<comment type="similarity">
    <text evidence="1">Belongs to the universal ribosomal protein uS9 family.</text>
</comment>